<dbReference type="EMBL" id="AF183959">
    <property type="protein sequence ID" value="AAF73830.1"/>
    <property type="molecule type" value="Genomic_DNA"/>
</dbReference>
<dbReference type="RefSeq" id="WP_010952495.1">
    <property type="nucleotide sequence ID" value="NZ_PZKR01000020.1"/>
</dbReference>
<dbReference type="SMR" id="Q9KJC4"/>
<dbReference type="GeneID" id="83682177"/>
<dbReference type="PATRIC" id="fig|303.175.peg.5272"/>
<dbReference type="eggNOG" id="COG1309">
    <property type="taxonomic scope" value="Bacteria"/>
</dbReference>
<dbReference type="OMA" id="MMEIIFH"/>
<dbReference type="GO" id="GO:0003700">
    <property type="term" value="F:DNA-binding transcription factor activity"/>
    <property type="evidence" value="ECO:0007669"/>
    <property type="project" value="TreeGrafter"/>
</dbReference>
<dbReference type="GO" id="GO:0000976">
    <property type="term" value="F:transcription cis-regulatory region binding"/>
    <property type="evidence" value="ECO:0007669"/>
    <property type="project" value="TreeGrafter"/>
</dbReference>
<dbReference type="FunFam" id="1.10.357.10:FF:000003">
    <property type="entry name" value="HTH-type transcriptional regulator AcrR"/>
    <property type="match status" value="1"/>
</dbReference>
<dbReference type="Gene3D" id="1.10.357.10">
    <property type="entry name" value="Tetracycline Repressor, domain 2"/>
    <property type="match status" value="1"/>
</dbReference>
<dbReference type="InterPro" id="IPR023772">
    <property type="entry name" value="DNA-bd_HTH_TetR-type_CS"/>
</dbReference>
<dbReference type="InterPro" id="IPR009057">
    <property type="entry name" value="Homeodomain-like_sf"/>
</dbReference>
<dbReference type="InterPro" id="IPR050109">
    <property type="entry name" value="HTH-type_TetR-like_transc_reg"/>
</dbReference>
<dbReference type="InterPro" id="IPR001647">
    <property type="entry name" value="HTH_TetR"/>
</dbReference>
<dbReference type="InterPro" id="IPR036271">
    <property type="entry name" value="Tet_transcr_reg_TetR-rel_C_sf"/>
</dbReference>
<dbReference type="InterPro" id="IPR013572">
    <property type="entry name" value="Tscrpt_reg_MAATS_C"/>
</dbReference>
<dbReference type="PANTHER" id="PTHR30055:SF240">
    <property type="entry name" value="HTH-TYPE TRANSCRIPTIONAL REGULATOR ACRR"/>
    <property type="match status" value="1"/>
</dbReference>
<dbReference type="PANTHER" id="PTHR30055">
    <property type="entry name" value="HTH-TYPE TRANSCRIPTIONAL REGULATOR RUTR"/>
    <property type="match status" value="1"/>
</dbReference>
<dbReference type="Pfam" id="PF08361">
    <property type="entry name" value="TetR_C_2"/>
    <property type="match status" value="1"/>
</dbReference>
<dbReference type="Pfam" id="PF00440">
    <property type="entry name" value="TetR_N"/>
    <property type="match status" value="1"/>
</dbReference>
<dbReference type="PRINTS" id="PR00455">
    <property type="entry name" value="HTHTETR"/>
</dbReference>
<dbReference type="SUPFAM" id="SSF46689">
    <property type="entry name" value="Homeodomain-like"/>
    <property type="match status" value="1"/>
</dbReference>
<dbReference type="SUPFAM" id="SSF48498">
    <property type="entry name" value="Tetracyclin repressor-like, C-terminal domain"/>
    <property type="match status" value="1"/>
</dbReference>
<dbReference type="PROSITE" id="PS01081">
    <property type="entry name" value="HTH_TETR_1"/>
    <property type="match status" value="1"/>
</dbReference>
<dbReference type="PROSITE" id="PS50977">
    <property type="entry name" value="HTH_TETR_2"/>
    <property type="match status" value="1"/>
</dbReference>
<accession>Q9KJC4</accession>
<reference key="1">
    <citation type="journal article" date="2001" name="Microbiology">
        <title>Identification and molecular characterization of an efflux system involved in Pseudomonas putida S12 multidrug resistance.</title>
        <authorList>
            <person name="Kieboom J."/>
            <person name="de Bont J.A.M."/>
        </authorList>
    </citation>
    <scope>NUCLEOTIDE SEQUENCE [GENOMIC DNA]</scope>
    <source>
        <strain>ATCC 700801 / S12</strain>
    </source>
</reference>
<organism>
    <name type="scientific">Pseudomonas putida</name>
    <name type="common">Arthrobacter siderocapsulatus</name>
    <dbReference type="NCBI Taxonomy" id="303"/>
    <lineage>
        <taxon>Bacteria</taxon>
        <taxon>Pseudomonadati</taxon>
        <taxon>Pseudomonadota</taxon>
        <taxon>Gammaproteobacteria</taxon>
        <taxon>Pseudomonadales</taxon>
        <taxon>Pseudomonadaceae</taxon>
        <taxon>Pseudomonas</taxon>
    </lineage>
</organism>
<sequence length="210" mass="23797">MVRRTKEEAQETRAQIIEAAERAFYKRGVARTTLADIAELAGVTRGAIYWHFNNKAELVQALLDSLHETHDHLARASESEDELDPLGCMRKLLLQVFNELVLDARTRRINEILHHKCEFTDDMCEIRQQRQSAVLDCHKGITLALANAVRRGQLPGELDVERAAVAMFAYVDGLIGRWLLLPDSVDLLGDVEKWVDTGLDMLRLSPALRK</sequence>
<feature type="chain" id="PRO_0000070624" description="Probable HTH-type transcriptional regulator ArpR">
    <location>
        <begin position="1"/>
        <end position="210"/>
    </location>
</feature>
<feature type="domain" description="HTH tetR-type" evidence="2">
    <location>
        <begin position="10"/>
        <end position="70"/>
    </location>
</feature>
<feature type="DNA-binding region" description="H-T-H motif" evidence="2">
    <location>
        <begin position="33"/>
        <end position="52"/>
    </location>
</feature>
<evidence type="ECO:0000250" key="1"/>
<evidence type="ECO:0000255" key="2">
    <source>
        <dbReference type="PROSITE-ProRule" id="PRU00335"/>
    </source>
</evidence>
<keyword id="KW-0238">DNA-binding</keyword>
<keyword id="KW-0678">Repressor</keyword>
<keyword id="KW-0804">Transcription</keyword>
<keyword id="KW-0805">Transcription regulation</keyword>
<name>ARPR_PSEPU</name>
<gene>
    <name type="primary">arpR</name>
</gene>
<comment type="function">
    <text evidence="1">Probable regulatory protein for the antibiotic efflux pump arpABC operon. May function as a repressor (By similarity).</text>
</comment>
<proteinExistence type="inferred from homology"/>
<protein>
    <recommendedName>
        <fullName>Probable HTH-type transcriptional regulator ArpR</fullName>
    </recommendedName>
    <alternativeName>
        <fullName>Antibiotic efflux pump ArpABC operon regulator</fullName>
    </alternativeName>
</protein>